<feature type="chain" id="PRO_0000409363" description="Phospholipase A1-II 1">
    <location>
        <begin position="1"/>
        <end position="393"/>
    </location>
</feature>
<feature type="coiled-coil region" evidence="2">
    <location>
        <begin position="200"/>
        <end position="220"/>
    </location>
</feature>
<feature type="active site" description="Acyl-ester intermediate" evidence="1">
    <location>
        <position position="225"/>
    </location>
</feature>
<feature type="active site" description="Charge relay system" evidence="3">
    <location>
        <position position="225"/>
    </location>
</feature>
<feature type="active site" description="Charge relay system" evidence="3">
    <location>
        <position position="284"/>
    </location>
</feature>
<feature type="active site" description="Charge relay system" evidence="3">
    <location>
        <position position="321"/>
    </location>
</feature>
<sequence length="393" mass="43956">MSSLRGLGNIARRWRELNGVSYWKGLLDPLDVDLRNNIINYGELSQAAYTGLNRERRSRYAGSCLFSRKDFLSRVDVSNPNLYVITKFIYAMCTVSLPDAFMIKSWSKAAWSKQSNWMGFVAVATDEGKEVLGRRDVVVAWRGTIRMVEWMDDLDISLVPASEIVRPGSADDPCVHGGWLSVYTSADPESQYNKQSARYQVLNEIKRLQDMYEHEETSITITGHSLGAALATINATDIVSNGYNKSCPVSAFVFGSPRVGNPDFQKAFDSAPDLRLLRIRNSPDVVPNWPKLGYSDAGTELMIDTGKSPYLKAPGNPLTWHDMECYMHGVAGTQGSNGGFKLEIDRDIALVNKHEDALKNEYAIPSSWWVVQNKGMVKGTDGRWHLADHEDDD</sequence>
<reference key="1">
    <citation type="journal article" date="2005" name="PLoS Biol.">
        <title>The genomes of Oryza sativa: a history of duplications.</title>
        <authorList>
            <person name="Yu J."/>
            <person name="Wang J."/>
            <person name="Lin W."/>
            <person name="Li S."/>
            <person name="Li H."/>
            <person name="Zhou J."/>
            <person name="Ni P."/>
            <person name="Dong W."/>
            <person name="Hu S."/>
            <person name="Zeng C."/>
            <person name="Zhang J."/>
            <person name="Zhang Y."/>
            <person name="Li R."/>
            <person name="Xu Z."/>
            <person name="Li S."/>
            <person name="Li X."/>
            <person name="Zheng H."/>
            <person name="Cong L."/>
            <person name="Lin L."/>
            <person name="Yin J."/>
            <person name="Geng J."/>
            <person name="Li G."/>
            <person name="Shi J."/>
            <person name="Liu J."/>
            <person name="Lv H."/>
            <person name="Li J."/>
            <person name="Wang J."/>
            <person name="Deng Y."/>
            <person name="Ran L."/>
            <person name="Shi X."/>
            <person name="Wang X."/>
            <person name="Wu Q."/>
            <person name="Li C."/>
            <person name="Ren X."/>
            <person name="Wang J."/>
            <person name="Wang X."/>
            <person name="Li D."/>
            <person name="Liu D."/>
            <person name="Zhang X."/>
            <person name="Ji Z."/>
            <person name="Zhao W."/>
            <person name="Sun Y."/>
            <person name="Zhang Z."/>
            <person name="Bao J."/>
            <person name="Han Y."/>
            <person name="Dong L."/>
            <person name="Ji J."/>
            <person name="Chen P."/>
            <person name="Wu S."/>
            <person name="Liu J."/>
            <person name="Xiao Y."/>
            <person name="Bu D."/>
            <person name="Tan J."/>
            <person name="Yang L."/>
            <person name="Ye C."/>
            <person name="Zhang J."/>
            <person name="Xu J."/>
            <person name="Zhou Y."/>
            <person name="Yu Y."/>
            <person name="Zhang B."/>
            <person name="Zhuang S."/>
            <person name="Wei H."/>
            <person name="Liu B."/>
            <person name="Lei M."/>
            <person name="Yu H."/>
            <person name="Li Y."/>
            <person name="Xu H."/>
            <person name="Wei S."/>
            <person name="He X."/>
            <person name="Fang L."/>
            <person name="Zhang Z."/>
            <person name="Zhang Y."/>
            <person name="Huang X."/>
            <person name="Su Z."/>
            <person name="Tong W."/>
            <person name="Li J."/>
            <person name="Tong Z."/>
            <person name="Li S."/>
            <person name="Ye J."/>
            <person name="Wang L."/>
            <person name="Fang L."/>
            <person name="Lei T."/>
            <person name="Chen C.-S."/>
            <person name="Chen H.-C."/>
            <person name="Xu Z."/>
            <person name="Li H."/>
            <person name="Huang H."/>
            <person name="Zhang F."/>
            <person name="Xu H."/>
            <person name="Li N."/>
            <person name="Zhao C."/>
            <person name="Li S."/>
            <person name="Dong L."/>
            <person name="Huang Y."/>
            <person name="Li L."/>
            <person name="Xi Y."/>
            <person name="Qi Q."/>
            <person name="Li W."/>
            <person name="Zhang B."/>
            <person name="Hu W."/>
            <person name="Zhang Y."/>
            <person name="Tian X."/>
            <person name="Jiao Y."/>
            <person name="Liang X."/>
            <person name="Jin J."/>
            <person name="Gao L."/>
            <person name="Zheng W."/>
            <person name="Hao B."/>
            <person name="Liu S.-M."/>
            <person name="Wang W."/>
            <person name="Yuan L."/>
            <person name="Cao M."/>
            <person name="McDermott J."/>
            <person name="Samudrala R."/>
            <person name="Wang J."/>
            <person name="Wong G.K.-S."/>
            <person name="Yang H."/>
        </authorList>
    </citation>
    <scope>NUCLEOTIDE SEQUENCE [LARGE SCALE GENOMIC DNA]</scope>
    <source>
        <strain>cv. 93-11</strain>
    </source>
</reference>
<organism>
    <name type="scientific">Oryza sativa subsp. indica</name>
    <name type="common">Rice</name>
    <dbReference type="NCBI Taxonomy" id="39946"/>
    <lineage>
        <taxon>Eukaryota</taxon>
        <taxon>Viridiplantae</taxon>
        <taxon>Streptophyta</taxon>
        <taxon>Embryophyta</taxon>
        <taxon>Tracheophyta</taxon>
        <taxon>Spermatophyta</taxon>
        <taxon>Magnoliopsida</taxon>
        <taxon>Liliopsida</taxon>
        <taxon>Poales</taxon>
        <taxon>Poaceae</taxon>
        <taxon>BOP clade</taxon>
        <taxon>Oryzoideae</taxon>
        <taxon>Oryzeae</taxon>
        <taxon>Oryzinae</taxon>
        <taxon>Oryza</taxon>
        <taxon>Oryza sativa</taxon>
    </lineage>
</organism>
<comment type="function">
    <text evidence="1">Acylhydrolase that catalyzes the hydrolysis of phospholipids at the sn-1 position.</text>
</comment>
<comment type="subcellular location">
    <subcellularLocation>
        <location evidence="1">Cytoplasm</location>
    </subcellularLocation>
</comment>
<comment type="similarity">
    <text evidence="4">Belongs to the AB hydrolase superfamily. Lipase family.</text>
</comment>
<comment type="sequence caution" evidence="4">
    <conflict type="erroneous gene model prediction">
        <sequence resource="EMBL-CDS" id="EAY75191"/>
    </conflict>
</comment>
<evidence type="ECO:0000250" key="1"/>
<evidence type="ECO:0000255" key="2"/>
<evidence type="ECO:0000255" key="3">
    <source>
        <dbReference type="PROSITE-ProRule" id="PRU10037"/>
    </source>
</evidence>
<evidence type="ECO:0000305" key="4"/>
<keyword id="KW-0175">Coiled coil</keyword>
<keyword id="KW-0963">Cytoplasm</keyword>
<keyword id="KW-0378">Hydrolase</keyword>
<keyword id="KW-0442">Lipid degradation</keyword>
<keyword id="KW-0443">Lipid metabolism</keyword>
<keyword id="KW-1185">Reference proteome</keyword>
<accession>A2WT95</accession>
<name>PLA1_ORYSI</name>
<proteinExistence type="inferred from homology"/>
<protein>
    <recommendedName>
        <fullName>Phospholipase A1-II 1</fullName>
        <ecNumber>3.1.1.-</ecNumber>
    </recommendedName>
</protein>
<gene>
    <name type="ORF">OsI_03083</name>
</gene>
<dbReference type="EC" id="3.1.1.-"/>
<dbReference type="EMBL" id="CM000126">
    <property type="protein sequence ID" value="EAY75191.1"/>
    <property type="status" value="ALT_SEQ"/>
    <property type="molecule type" value="Genomic_DNA"/>
</dbReference>
<dbReference type="SMR" id="A2WT95"/>
<dbReference type="STRING" id="39946.A2WT95"/>
<dbReference type="ESTHER" id="orysj-pla1">
    <property type="family name" value="Plant_phospholipase"/>
</dbReference>
<dbReference type="Proteomes" id="UP000007015">
    <property type="component" value="Chromosome 1"/>
</dbReference>
<dbReference type="GO" id="GO:0005737">
    <property type="term" value="C:cytoplasm"/>
    <property type="evidence" value="ECO:0000250"/>
    <property type="project" value="UniProtKB"/>
</dbReference>
<dbReference type="GO" id="GO:0008970">
    <property type="term" value="F:phospholipase A1 activity"/>
    <property type="evidence" value="ECO:0000250"/>
    <property type="project" value="UniProtKB"/>
</dbReference>
<dbReference type="GO" id="GO:0016042">
    <property type="term" value="P:lipid catabolic process"/>
    <property type="evidence" value="ECO:0007669"/>
    <property type="project" value="UniProtKB-KW"/>
</dbReference>
<dbReference type="CDD" id="cd00519">
    <property type="entry name" value="Lipase_3"/>
    <property type="match status" value="1"/>
</dbReference>
<dbReference type="FunFam" id="3.40.50.1820:FF:000065">
    <property type="entry name" value="Phospholipase A1-II 3"/>
    <property type="match status" value="1"/>
</dbReference>
<dbReference type="Gene3D" id="3.40.50.1820">
    <property type="entry name" value="alpha/beta hydrolase"/>
    <property type="match status" value="1"/>
</dbReference>
<dbReference type="InterPro" id="IPR029058">
    <property type="entry name" value="AB_hydrolase_fold"/>
</dbReference>
<dbReference type="InterPro" id="IPR002921">
    <property type="entry name" value="Fungal_lipase-type"/>
</dbReference>
<dbReference type="InterPro" id="IPR033556">
    <property type="entry name" value="PLA"/>
</dbReference>
<dbReference type="PANTHER" id="PTHR31828:SF6">
    <property type="entry name" value="PHOSPHOLIPASE A1-II 1"/>
    <property type="match status" value="1"/>
</dbReference>
<dbReference type="PANTHER" id="PTHR31828">
    <property type="entry name" value="PHOSPHOLIPASE A1-IIGAMMA"/>
    <property type="match status" value="1"/>
</dbReference>
<dbReference type="Pfam" id="PF01764">
    <property type="entry name" value="Lipase_3"/>
    <property type="match status" value="1"/>
</dbReference>
<dbReference type="SUPFAM" id="SSF53474">
    <property type="entry name" value="alpha/beta-Hydrolases"/>
    <property type="match status" value="1"/>
</dbReference>
<dbReference type="PROSITE" id="PS00120">
    <property type="entry name" value="LIPASE_SER"/>
    <property type="match status" value="1"/>
</dbReference>